<comment type="function">
    <text evidence="1">Catalyzes the formation of 6,7-dimethyl-8-ribityllumazine by condensation of 5-amino-6-(D-ribitylamino)uracil with 3,4-dihydroxy-2-butanone 4-phosphate. This is the penultimate step in the biosynthesis of riboflavin.</text>
</comment>
<comment type="catalytic activity">
    <reaction evidence="1">
        <text>(2S)-2-hydroxy-3-oxobutyl phosphate + 5-amino-6-(D-ribitylamino)uracil = 6,7-dimethyl-8-(1-D-ribityl)lumazine + phosphate + 2 H2O + H(+)</text>
        <dbReference type="Rhea" id="RHEA:26152"/>
        <dbReference type="ChEBI" id="CHEBI:15377"/>
        <dbReference type="ChEBI" id="CHEBI:15378"/>
        <dbReference type="ChEBI" id="CHEBI:15934"/>
        <dbReference type="ChEBI" id="CHEBI:43474"/>
        <dbReference type="ChEBI" id="CHEBI:58201"/>
        <dbReference type="ChEBI" id="CHEBI:58830"/>
        <dbReference type="EC" id="2.5.1.78"/>
    </reaction>
</comment>
<comment type="pathway">
    <text evidence="1">Cofactor biosynthesis; riboflavin biosynthesis; riboflavin from 2-hydroxy-3-oxobutyl phosphate and 5-amino-6-(D-ribitylamino)uracil: step 1/2.</text>
</comment>
<comment type="subunit">
    <text evidence="1">Forms an icosahedral capsid composed of 60 subunits, arranged as a dodecamer of pentamers.</text>
</comment>
<comment type="similarity">
    <text evidence="1">Belongs to the DMRL synthase family.</text>
</comment>
<keyword id="KW-1185">Reference proteome</keyword>
<keyword id="KW-0686">Riboflavin biosynthesis</keyword>
<keyword id="KW-0808">Transferase</keyword>
<dbReference type="EC" id="2.5.1.78" evidence="1"/>
<dbReference type="EMBL" id="FM180568">
    <property type="protein sequence ID" value="CAS07898.1"/>
    <property type="molecule type" value="Genomic_DNA"/>
</dbReference>
<dbReference type="SMR" id="B7UJN8"/>
<dbReference type="KEGG" id="ecg:E2348C_0350"/>
<dbReference type="HOGENOM" id="CLU_089358_1_1_6"/>
<dbReference type="UniPathway" id="UPA00275">
    <property type="reaction ID" value="UER00404"/>
</dbReference>
<dbReference type="Proteomes" id="UP000008205">
    <property type="component" value="Chromosome"/>
</dbReference>
<dbReference type="GO" id="GO:0005829">
    <property type="term" value="C:cytosol"/>
    <property type="evidence" value="ECO:0007669"/>
    <property type="project" value="TreeGrafter"/>
</dbReference>
<dbReference type="GO" id="GO:0009349">
    <property type="term" value="C:riboflavin synthase complex"/>
    <property type="evidence" value="ECO:0007669"/>
    <property type="project" value="InterPro"/>
</dbReference>
<dbReference type="GO" id="GO:0000906">
    <property type="term" value="F:6,7-dimethyl-8-ribityllumazine synthase activity"/>
    <property type="evidence" value="ECO:0007669"/>
    <property type="project" value="UniProtKB-UniRule"/>
</dbReference>
<dbReference type="GO" id="GO:0009231">
    <property type="term" value="P:riboflavin biosynthetic process"/>
    <property type="evidence" value="ECO:0007669"/>
    <property type="project" value="UniProtKB-UniRule"/>
</dbReference>
<dbReference type="CDD" id="cd09209">
    <property type="entry name" value="Lumazine_synthase-I"/>
    <property type="match status" value="1"/>
</dbReference>
<dbReference type="FunFam" id="3.40.50.960:FF:000001">
    <property type="entry name" value="6,7-dimethyl-8-ribityllumazine synthase"/>
    <property type="match status" value="1"/>
</dbReference>
<dbReference type="Gene3D" id="3.40.50.960">
    <property type="entry name" value="Lumazine/riboflavin synthase"/>
    <property type="match status" value="1"/>
</dbReference>
<dbReference type="HAMAP" id="MF_00178">
    <property type="entry name" value="Lumazine_synth"/>
    <property type="match status" value="1"/>
</dbReference>
<dbReference type="InterPro" id="IPR034964">
    <property type="entry name" value="LS"/>
</dbReference>
<dbReference type="InterPro" id="IPR002180">
    <property type="entry name" value="LS/RS"/>
</dbReference>
<dbReference type="InterPro" id="IPR036467">
    <property type="entry name" value="LS/RS_sf"/>
</dbReference>
<dbReference type="NCBIfam" id="TIGR00114">
    <property type="entry name" value="lumazine-synth"/>
    <property type="match status" value="1"/>
</dbReference>
<dbReference type="NCBIfam" id="NF000812">
    <property type="entry name" value="PRK00061.1-4"/>
    <property type="match status" value="1"/>
</dbReference>
<dbReference type="PANTHER" id="PTHR21058:SF0">
    <property type="entry name" value="6,7-DIMETHYL-8-RIBITYLLUMAZINE SYNTHASE"/>
    <property type="match status" value="1"/>
</dbReference>
<dbReference type="PANTHER" id="PTHR21058">
    <property type="entry name" value="6,7-DIMETHYL-8-RIBITYLLUMAZINE SYNTHASE DMRL SYNTHASE LUMAZINE SYNTHASE"/>
    <property type="match status" value="1"/>
</dbReference>
<dbReference type="Pfam" id="PF00885">
    <property type="entry name" value="DMRL_synthase"/>
    <property type="match status" value="1"/>
</dbReference>
<dbReference type="SUPFAM" id="SSF52121">
    <property type="entry name" value="Lumazine synthase"/>
    <property type="match status" value="1"/>
</dbReference>
<reference key="1">
    <citation type="journal article" date="2009" name="J. Bacteriol.">
        <title>Complete genome sequence and comparative genome analysis of enteropathogenic Escherichia coli O127:H6 strain E2348/69.</title>
        <authorList>
            <person name="Iguchi A."/>
            <person name="Thomson N.R."/>
            <person name="Ogura Y."/>
            <person name="Saunders D."/>
            <person name="Ooka T."/>
            <person name="Henderson I.R."/>
            <person name="Harris D."/>
            <person name="Asadulghani M."/>
            <person name="Kurokawa K."/>
            <person name="Dean P."/>
            <person name="Kenny B."/>
            <person name="Quail M.A."/>
            <person name="Thurston S."/>
            <person name="Dougan G."/>
            <person name="Hayashi T."/>
            <person name="Parkhill J."/>
            <person name="Frankel G."/>
        </authorList>
    </citation>
    <scope>NUCLEOTIDE SEQUENCE [LARGE SCALE GENOMIC DNA]</scope>
    <source>
        <strain>E2348/69 / EPEC</strain>
    </source>
</reference>
<accession>B7UJN8</accession>
<feature type="chain" id="PRO_1000195484" description="6,7-dimethyl-8-ribityllumazine synthase">
    <location>
        <begin position="1"/>
        <end position="156"/>
    </location>
</feature>
<feature type="active site" description="Proton donor" evidence="1">
    <location>
        <position position="89"/>
    </location>
</feature>
<feature type="binding site" evidence="1">
    <location>
        <position position="22"/>
    </location>
    <ligand>
        <name>5-amino-6-(D-ribitylamino)uracil</name>
        <dbReference type="ChEBI" id="CHEBI:15934"/>
    </ligand>
</feature>
<feature type="binding site" evidence="1">
    <location>
        <begin position="57"/>
        <end position="59"/>
    </location>
    <ligand>
        <name>5-amino-6-(D-ribitylamino)uracil</name>
        <dbReference type="ChEBI" id="CHEBI:15934"/>
    </ligand>
</feature>
<feature type="binding site" evidence="1">
    <location>
        <begin position="81"/>
        <end position="83"/>
    </location>
    <ligand>
        <name>5-amino-6-(D-ribitylamino)uracil</name>
        <dbReference type="ChEBI" id="CHEBI:15934"/>
    </ligand>
</feature>
<feature type="binding site" evidence="1">
    <location>
        <begin position="86"/>
        <end position="87"/>
    </location>
    <ligand>
        <name>(2S)-2-hydroxy-3-oxobutyl phosphate</name>
        <dbReference type="ChEBI" id="CHEBI:58830"/>
    </ligand>
</feature>
<feature type="binding site" evidence="1">
    <location>
        <position position="114"/>
    </location>
    <ligand>
        <name>5-amino-6-(D-ribitylamino)uracil</name>
        <dbReference type="ChEBI" id="CHEBI:15934"/>
    </ligand>
</feature>
<feature type="binding site" evidence="1">
    <location>
        <position position="128"/>
    </location>
    <ligand>
        <name>(2S)-2-hydroxy-3-oxobutyl phosphate</name>
        <dbReference type="ChEBI" id="CHEBI:58830"/>
    </ligand>
</feature>
<evidence type="ECO:0000255" key="1">
    <source>
        <dbReference type="HAMAP-Rule" id="MF_00178"/>
    </source>
</evidence>
<organism>
    <name type="scientific">Escherichia coli O127:H6 (strain E2348/69 / EPEC)</name>
    <dbReference type="NCBI Taxonomy" id="574521"/>
    <lineage>
        <taxon>Bacteria</taxon>
        <taxon>Pseudomonadati</taxon>
        <taxon>Pseudomonadota</taxon>
        <taxon>Gammaproteobacteria</taxon>
        <taxon>Enterobacterales</taxon>
        <taxon>Enterobacteriaceae</taxon>
        <taxon>Escherichia</taxon>
    </lineage>
</organism>
<name>RISB_ECO27</name>
<proteinExistence type="inferred from homology"/>
<protein>
    <recommendedName>
        <fullName evidence="1">6,7-dimethyl-8-ribityllumazine synthase</fullName>
        <shortName evidence="1">DMRL synthase</shortName>
        <shortName evidence="1">LS</shortName>
        <shortName evidence="1">Lumazine synthase</shortName>
        <ecNumber evidence="1">2.5.1.78</ecNumber>
    </recommendedName>
</protein>
<gene>
    <name evidence="1" type="primary">ribH</name>
    <name type="ordered locus">E2348C_0350</name>
</gene>
<sequence length="156" mass="16157">MNIIEANVATPDARVAITIARFNNFINDSLLEGAIDALKRIGQVKDENITVVWVPGAYELPLAAGALAKTGKYDAVIALGTVIRGGTAHFEYVAGGASNGLAHVAQDSEIPVAFGVLTTESIEQAIERAGTKAGNKGAEAALTALEMINVLKAIKA</sequence>